<feature type="chain" id="PRO_0000167479" description="Ribosome-recycling factor">
    <location>
        <begin position="1"/>
        <end position="185"/>
    </location>
</feature>
<reference key="1">
    <citation type="journal article" date="2004" name="Science">
        <title>The genomic sequence of the accidental pathogen Legionella pneumophila.</title>
        <authorList>
            <person name="Chien M."/>
            <person name="Morozova I."/>
            <person name="Shi S."/>
            <person name="Sheng H."/>
            <person name="Chen J."/>
            <person name="Gomez S.M."/>
            <person name="Asamani G."/>
            <person name="Hill K."/>
            <person name="Nuara J."/>
            <person name="Feder M."/>
            <person name="Rineer J."/>
            <person name="Greenberg J.J."/>
            <person name="Steshenko V."/>
            <person name="Park S.H."/>
            <person name="Zhao B."/>
            <person name="Teplitskaya E."/>
            <person name="Edwards J.R."/>
            <person name="Pampou S."/>
            <person name="Georghiou A."/>
            <person name="Chou I.-C."/>
            <person name="Iannuccilli W."/>
            <person name="Ulz M.E."/>
            <person name="Kim D.H."/>
            <person name="Geringer-Sameth A."/>
            <person name="Goldsberry C."/>
            <person name="Morozov P."/>
            <person name="Fischer S.G."/>
            <person name="Segal G."/>
            <person name="Qu X."/>
            <person name="Rzhetsky A."/>
            <person name="Zhang P."/>
            <person name="Cayanis E."/>
            <person name="De Jong P.J."/>
            <person name="Ju J."/>
            <person name="Kalachikov S."/>
            <person name="Shuman H.A."/>
            <person name="Russo J.J."/>
        </authorList>
    </citation>
    <scope>NUCLEOTIDE SEQUENCE [LARGE SCALE GENOMIC DNA]</scope>
    <source>
        <strain>Philadelphia 1 / ATCC 33152 / DSM 7513</strain>
    </source>
</reference>
<organism>
    <name type="scientific">Legionella pneumophila subsp. pneumophila (strain Philadelphia 1 / ATCC 33152 / DSM 7513)</name>
    <dbReference type="NCBI Taxonomy" id="272624"/>
    <lineage>
        <taxon>Bacteria</taxon>
        <taxon>Pseudomonadati</taxon>
        <taxon>Pseudomonadota</taxon>
        <taxon>Gammaproteobacteria</taxon>
        <taxon>Legionellales</taxon>
        <taxon>Legionellaceae</taxon>
        <taxon>Legionella</taxon>
    </lineage>
</organism>
<protein>
    <recommendedName>
        <fullName evidence="1">Ribosome-recycling factor</fullName>
        <shortName evidence="1">RRF</shortName>
    </recommendedName>
    <alternativeName>
        <fullName evidence="1">Ribosome-releasing factor</fullName>
    </alternativeName>
</protein>
<name>RRF_LEGPH</name>
<evidence type="ECO:0000255" key="1">
    <source>
        <dbReference type="HAMAP-Rule" id="MF_00040"/>
    </source>
</evidence>
<comment type="function">
    <text evidence="1">Responsible for the release of ribosomes from messenger RNA at the termination of protein biosynthesis. May increase the efficiency of translation by recycling ribosomes from one round of translation to another.</text>
</comment>
<comment type="subcellular location">
    <subcellularLocation>
        <location evidence="1">Cytoplasm</location>
    </subcellularLocation>
</comment>
<comment type="similarity">
    <text evidence="1">Belongs to the RRF family.</text>
</comment>
<accession>Q5ZUT1</accession>
<keyword id="KW-0963">Cytoplasm</keyword>
<keyword id="KW-0648">Protein biosynthesis</keyword>
<keyword id="KW-1185">Reference proteome</keyword>
<proteinExistence type="inferred from homology"/>
<sequence length="185" mass="20863">MINEIKQDSEKRMKKTIEALHTDMSKIRTGRANASLLDHVMVDYYGSPTPLSQVANITTSDSRTILVTPWEKSMVAAIEKAILNSDLGLNPATAGTAIRVPMPPLTEERRKELIKVVRHEGEQGRVSIRNIRRDANNQLKELVKEKAISEDDERRAAEAIQKLTDRYISEVDAVLAEKEKDLMEI</sequence>
<dbReference type="EMBL" id="AE017354">
    <property type="protein sequence ID" value="AAU27791.1"/>
    <property type="molecule type" value="Genomic_DNA"/>
</dbReference>
<dbReference type="RefSeq" id="WP_010947438.1">
    <property type="nucleotide sequence ID" value="NC_002942.5"/>
</dbReference>
<dbReference type="RefSeq" id="YP_095738.1">
    <property type="nucleotide sequence ID" value="NC_002942.5"/>
</dbReference>
<dbReference type="SMR" id="Q5ZUT1"/>
<dbReference type="STRING" id="272624.lpg1711"/>
<dbReference type="PaxDb" id="272624-lpg1711"/>
<dbReference type="GeneID" id="57035700"/>
<dbReference type="KEGG" id="lpn:lpg1711"/>
<dbReference type="PATRIC" id="fig|272624.6.peg.1792"/>
<dbReference type="eggNOG" id="COG0233">
    <property type="taxonomic scope" value="Bacteria"/>
</dbReference>
<dbReference type="HOGENOM" id="CLU_073981_2_1_6"/>
<dbReference type="OrthoDB" id="9804006at2"/>
<dbReference type="Proteomes" id="UP000000609">
    <property type="component" value="Chromosome"/>
</dbReference>
<dbReference type="GO" id="GO:0005829">
    <property type="term" value="C:cytosol"/>
    <property type="evidence" value="ECO:0007669"/>
    <property type="project" value="GOC"/>
</dbReference>
<dbReference type="GO" id="GO:0043023">
    <property type="term" value="F:ribosomal large subunit binding"/>
    <property type="evidence" value="ECO:0007669"/>
    <property type="project" value="TreeGrafter"/>
</dbReference>
<dbReference type="GO" id="GO:0002184">
    <property type="term" value="P:cytoplasmic translational termination"/>
    <property type="evidence" value="ECO:0007669"/>
    <property type="project" value="TreeGrafter"/>
</dbReference>
<dbReference type="CDD" id="cd00520">
    <property type="entry name" value="RRF"/>
    <property type="match status" value="1"/>
</dbReference>
<dbReference type="FunFam" id="1.10.132.20:FF:000001">
    <property type="entry name" value="Ribosome-recycling factor"/>
    <property type="match status" value="1"/>
</dbReference>
<dbReference type="FunFam" id="3.30.1360.40:FF:000001">
    <property type="entry name" value="Ribosome-recycling factor"/>
    <property type="match status" value="1"/>
</dbReference>
<dbReference type="Gene3D" id="3.30.1360.40">
    <property type="match status" value="1"/>
</dbReference>
<dbReference type="Gene3D" id="1.10.132.20">
    <property type="entry name" value="Ribosome-recycling factor"/>
    <property type="match status" value="1"/>
</dbReference>
<dbReference type="HAMAP" id="MF_00040">
    <property type="entry name" value="RRF"/>
    <property type="match status" value="1"/>
</dbReference>
<dbReference type="InterPro" id="IPR002661">
    <property type="entry name" value="Ribosome_recyc_fac"/>
</dbReference>
<dbReference type="InterPro" id="IPR023584">
    <property type="entry name" value="Ribosome_recyc_fac_dom"/>
</dbReference>
<dbReference type="InterPro" id="IPR036191">
    <property type="entry name" value="RRF_sf"/>
</dbReference>
<dbReference type="NCBIfam" id="TIGR00496">
    <property type="entry name" value="frr"/>
    <property type="match status" value="1"/>
</dbReference>
<dbReference type="PANTHER" id="PTHR20982:SF3">
    <property type="entry name" value="MITOCHONDRIAL RIBOSOME RECYCLING FACTOR PSEUDO 1"/>
    <property type="match status" value="1"/>
</dbReference>
<dbReference type="PANTHER" id="PTHR20982">
    <property type="entry name" value="RIBOSOME RECYCLING FACTOR"/>
    <property type="match status" value="1"/>
</dbReference>
<dbReference type="Pfam" id="PF01765">
    <property type="entry name" value="RRF"/>
    <property type="match status" value="1"/>
</dbReference>
<dbReference type="SUPFAM" id="SSF55194">
    <property type="entry name" value="Ribosome recycling factor, RRF"/>
    <property type="match status" value="1"/>
</dbReference>
<gene>
    <name evidence="1" type="primary">frr</name>
    <name type="ordered locus">lpg1711</name>
</gene>